<proteinExistence type="inferred from homology"/>
<name>PELO_METS3</name>
<sequence>MKIVKQDKKEGIVTLVPETLDDLWHLSHIVEVGDSVSSKTTRRIQDNTGDKLRSDRGVKKTFTLRIDVENITFHIFTGKLRLTGVITKGPEDLIPLGSHHTVEVKLNTPITIKKEKWANWALKRLNQAIEASKKLAAIIVLLEDDTATLGLMRQFGIEYYGPIKGSVSGKRIVDKNRSKAIAQFYEKVIESVNKFHDIQNIVVAGPGFVKNDFYDYIKNKHKDLADKAIIESTGSGGRVGIHEVLKKGTVEKLTVENRVASEMVAINNLLEEIGKNSSKVAYGEKETVKAINLGAVKQLLVLDSAVAINDMGNLMDMVENMNGEVMVISSQHEGGEQLKGLGSMAAILRYEIA</sequence>
<accession>A5UKW7</accession>
<evidence type="ECO:0000255" key="1">
    <source>
        <dbReference type="HAMAP-Rule" id="MF_01853"/>
    </source>
</evidence>
<gene>
    <name evidence="1" type="primary">pelA</name>
    <name type="ordered locus">Msm_0640</name>
</gene>
<dbReference type="EC" id="3.1.-.-" evidence="1"/>
<dbReference type="EMBL" id="CP000678">
    <property type="protein sequence ID" value="ABQ86845.1"/>
    <property type="molecule type" value="Genomic_DNA"/>
</dbReference>
<dbReference type="RefSeq" id="WP_011954017.1">
    <property type="nucleotide sequence ID" value="NZ_CP117965.1"/>
</dbReference>
<dbReference type="SMR" id="A5UKW7"/>
<dbReference type="STRING" id="420247.Msm_0640"/>
<dbReference type="EnsemblBacteria" id="ABQ86845">
    <property type="protein sequence ID" value="ABQ86845"/>
    <property type="gene ID" value="Msm_0640"/>
</dbReference>
<dbReference type="KEGG" id="msi:Msm_0640"/>
<dbReference type="PATRIC" id="fig|420247.28.peg.637"/>
<dbReference type="eggNOG" id="arCOG01741">
    <property type="taxonomic scope" value="Archaea"/>
</dbReference>
<dbReference type="HOGENOM" id="CLU_023334_0_0_2"/>
<dbReference type="Proteomes" id="UP000001992">
    <property type="component" value="Chromosome"/>
</dbReference>
<dbReference type="GO" id="GO:0005737">
    <property type="term" value="C:cytoplasm"/>
    <property type="evidence" value="ECO:0007669"/>
    <property type="project" value="UniProtKB-SubCell"/>
</dbReference>
<dbReference type="GO" id="GO:0004519">
    <property type="term" value="F:endonuclease activity"/>
    <property type="evidence" value="ECO:0007669"/>
    <property type="project" value="UniProtKB-UniRule"/>
</dbReference>
<dbReference type="GO" id="GO:0046872">
    <property type="term" value="F:metal ion binding"/>
    <property type="evidence" value="ECO:0007669"/>
    <property type="project" value="UniProtKB-UniRule"/>
</dbReference>
<dbReference type="GO" id="GO:0070651">
    <property type="term" value="P:nonfunctional rRNA decay"/>
    <property type="evidence" value="ECO:0007669"/>
    <property type="project" value="TreeGrafter"/>
</dbReference>
<dbReference type="GO" id="GO:0070966">
    <property type="term" value="P:nuclear-transcribed mRNA catabolic process, no-go decay"/>
    <property type="evidence" value="ECO:0007669"/>
    <property type="project" value="InterPro"/>
</dbReference>
<dbReference type="GO" id="GO:0070481">
    <property type="term" value="P:nuclear-transcribed mRNA catabolic process, non-stop decay"/>
    <property type="evidence" value="ECO:0007669"/>
    <property type="project" value="InterPro"/>
</dbReference>
<dbReference type="GO" id="GO:0032790">
    <property type="term" value="P:ribosome disassembly"/>
    <property type="evidence" value="ECO:0007669"/>
    <property type="project" value="TreeGrafter"/>
</dbReference>
<dbReference type="GO" id="GO:0071025">
    <property type="term" value="P:RNA surveillance"/>
    <property type="evidence" value="ECO:0007669"/>
    <property type="project" value="InterPro"/>
</dbReference>
<dbReference type="FunFam" id="2.30.30.870:FF:000002">
    <property type="entry name" value="Protein pelota homolog"/>
    <property type="match status" value="1"/>
</dbReference>
<dbReference type="Gene3D" id="3.30.1330.30">
    <property type="match status" value="1"/>
</dbReference>
<dbReference type="Gene3D" id="3.30.420.60">
    <property type="entry name" value="eRF1 domain 2"/>
    <property type="match status" value="1"/>
</dbReference>
<dbReference type="Gene3D" id="2.30.30.870">
    <property type="entry name" value="Pelota, domain A"/>
    <property type="match status" value="1"/>
</dbReference>
<dbReference type="HAMAP" id="MF_01853">
    <property type="entry name" value="PelO"/>
    <property type="match status" value="1"/>
</dbReference>
<dbReference type="InterPro" id="IPR042226">
    <property type="entry name" value="eFR1_2_sf"/>
</dbReference>
<dbReference type="InterPro" id="IPR005140">
    <property type="entry name" value="eRF1_1_Pelota"/>
</dbReference>
<dbReference type="InterPro" id="IPR005141">
    <property type="entry name" value="eRF1_2"/>
</dbReference>
<dbReference type="InterPro" id="IPR005142">
    <property type="entry name" value="eRF1_3"/>
</dbReference>
<dbReference type="InterPro" id="IPR038069">
    <property type="entry name" value="Pelota/DOM34_N"/>
</dbReference>
<dbReference type="InterPro" id="IPR023521">
    <property type="entry name" value="Pelota_arc"/>
</dbReference>
<dbReference type="InterPro" id="IPR029064">
    <property type="entry name" value="Ribosomal_eL30-like_sf"/>
</dbReference>
<dbReference type="InterPro" id="IPR004405">
    <property type="entry name" value="Transl-rel_pelota"/>
</dbReference>
<dbReference type="NCBIfam" id="TIGR00111">
    <property type="entry name" value="pelota"/>
    <property type="match status" value="1"/>
</dbReference>
<dbReference type="PANTHER" id="PTHR10853">
    <property type="entry name" value="PELOTA"/>
    <property type="match status" value="1"/>
</dbReference>
<dbReference type="PANTHER" id="PTHR10853:SF0">
    <property type="entry name" value="PROTEIN PELOTA HOMOLOG"/>
    <property type="match status" value="1"/>
</dbReference>
<dbReference type="Pfam" id="PF03463">
    <property type="entry name" value="eRF1_1"/>
    <property type="match status" value="1"/>
</dbReference>
<dbReference type="Pfam" id="PF03464">
    <property type="entry name" value="eRF1_2"/>
    <property type="match status" value="1"/>
</dbReference>
<dbReference type="Pfam" id="PF03465">
    <property type="entry name" value="eRF1_3"/>
    <property type="match status" value="1"/>
</dbReference>
<dbReference type="SMART" id="SM01194">
    <property type="entry name" value="eRF1_1"/>
    <property type="match status" value="1"/>
</dbReference>
<dbReference type="SUPFAM" id="SSF159065">
    <property type="entry name" value="Dom34/Pelota N-terminal domain-like"/>
    <property type="match status" value="1"/>
</dbReference>
<dbReference type="SUPFAM" id="SSF55315">
    <property type="entry name" value="L30e-like"/>
    <property type="match status" value="1"/>
</dbReference>
<dbReference type="SUPFAM" id="SSF53137">
    <property type="entry name" value="Translational machinery components"/>
    <property type="match status" value="1"/>
</dbReference>
<organism>
    <name type="scientific">Methanobrevibacter smithii (strain ATCC 35061 / DSM 861 / OCM 144 / PS)</name>
    <dbReference type="NCBI Taxonomy" id="420247"/>
    <lineage>
        <taxon>Archaea</taxon>
        <taxon>Methanobacteriati</taxon>
        <taxon>Methanobacteriota</taxon>
        <taxon>Methanomada group</taxon>
        <taxon>Methanobacteria</taxon>
        <taxon>Methanobacteriales</taxon>
        <taxon>Methanobacteriaceae</taxon>
        <taxon>Methanobrevibacter</taxon>
    </lineage>
</organism>
<feature type="chain" id="PRO_0000361792" description="Protein pelota homolog">
    <location>
        <begin position="1"/>
        <end position="353"/>
    </location>
</feature>
<protein>
    <recommendedName>
        <fullName evidence="1">Protein pelota homolog</fullName>
        <ecNumber evidence="1">3.1.-.-</ecNumber>
    </recommendedName>
</protein>
<reference key="1">
    <citation type="journal article" date="2007" name="Proc. Natl. Acad. Sci. U.S.A.">
        <title>Genomic and metabolic adaptations of Methanobrevibacter smithii to the human gut.</title>
        <authorList>
            <person name="Samuel B.S."/>
            <person name="Hansen E.E."/>
            <person name="Manchester J.K."/>
            <person name="Coutinho P.M."/>
            <person name="Henrissat B."/>
            <person name="Fulton R."/>
            <person name="Latreille P."/>
            <person name="Kim K."/>
            <person name="Wilson R.K."/>
            <person name="Gordon J.I."/>
        </authorList>
    </citation>
    <scope>NUCLEOTIDE SEQUENCE [LARGE SCALE GENOMIC DNA]</scope>
    <source>
        <strain>ATCC 35061 / DSM 861 / OCM 144 / PS</strain>
    </source>
</reference>
<keyword id="KW-0963">Cytoplasm</keyword>
<keyword id="KW-0255">Endonuclease</keyword>
<keyword id="KW-0378">Hydrolase</keyword>
<keyword id="KW-0479">Metal-binding</keyword>
<keyword id="KW-0540">Nuclease</keyword>
<comment type="function">
    <text evidence="1">May function in recognizing stalled ribosomes, interact with stem-loop structures in stalled mRNA molecules, and effect endonucleolytic cleavage of the mRNA. May play a role in the release non-functional ribosomes and degradation of damaged mRNAs. Has endoribonuclease activity.</text>
</comment>
<comment type="cofactor">
    <cofactor evidence="1">
        <name>a divalent metal cation</name>
        <dbReference type="ChEBI" id="CHEBI:60240"/>
    </cofactor>
</comment>
<comment type="subunit">
    <text evidence="1">Monomer.</text>
</comment>
<comment type="subcellular location">
    <subcellularLocation>
        <location evidence="1">Cytoplasm</location>
    </subcellularLocation>
</comment>
<comment type="domain">
    <text evidence="1">The N-terminal domain has the RNA-binding Sm fold. It harbors the endoribonuclease activity.</text>
</comment>
<comment type="similarity">
    <text evidence="1">Belongs to the eukaryotic release factor 1 family. Pelota subfamily.</text>
</comment>